<dbReference type="EC" id="2.4.2.29" evidence="1"/>
<dbReference type="EMBL" id="CU459141">
    <property type="protein sequence ID" value="CAM85496.1"/>
    <property type="molecule type" value="Genomic_DNA"/>
</dbReference>
<dbReference type="RefSeq" id="WP_000667229.1">
    <property type="nucleotide sequence ID" value="NZ_JBDGFB010000017.1"/>
</dbReference>
<dbReference type="SMR" id="B0V625"/>
<dbReference type="EnsemblBacteria" id="CAM85496">
    <property type="protein sequence ID" value="CAM85496"/>
    <property type="gene ID" value="ABAYE0528"/>
</dbReference>
<dbReference type="KEGG" id="aby:ABAYE0528"/>
<dbReference type="HOGENOM" id="CLU_022060_0_1_6"/>
<dbReference type="UniPathway" id="UPA00392"/>
<dbReference type="GO" id="GO:0005829">
    <property type="term" value="C:cytosol"/>
    <property type="evidence" value="ECO:0007669"/>
    <property type="project" value="TreeGrafter"/>
</dbReference>
<dbReference type="GO" id="GO:0046872">
    <property type="term" value="F:metal ion binding"/>
    <property type="evidence" value="ECO:0007669"/>
    <property type="project" value="UniProtKB-KW"/>
</dbReference>
<dbReference type="GO" id="GO:0008479">
    <property type="term" value="F:tRNA-guanosine(34) queuine transglycosylase activity"/>
    <property type="evidence" value="ECO:0007669"/>
    <property type="project" value="UniProtKB-UniRule"/>
</dbReference>
<dbReference type="GO" id="GO:0008616">
    <property type="term" value="P:queuosine biosynthetic process"/>
    <property type="evidence" value="ECO:0007669"/>
    <property type="project" value="UniProtKB-UniRule"/>
</dbReference>
<dbReference type="GO" id="GO:0002099">
    <property type="term" value="P:tRNA wobble guanine modification"/>
    <property type="evidence" value="ECO:0007669"/>
    <property type="project" value="TreeGrafter"/>
</dbReference>
<dbReference type="GO" id="GO:0101030">
    <property type="term" value="P:tRNA-guanine transglycosylation"/>
    <property type="evidence" value="ECO:0007669"/>
    <property type="project" value="InterPro"/>
</dbReference>
<dbReference type="FunFam" id="3.20.20.105:FF:000001">
    <property type="entry name" value="Queuine tRNA-ribosyltransferase"/>
    <property type="match status" value="1"/>
</dbReference>
<dbReference type="Gene3D" id="3.20.20.105">
    <property type="entry name" value="Queuine tRNA-ribosyltransferase-like"/>
    <property type="match status" value="1"/>
</dbReference>
<dbReference type="HAMAP" id="MF_00168">
    <property type="entry name" value="Q_tRNA_Tgt"/>
    <property type="match status" value="1"/>
</dbReference>
<dbReference type="InterPro" id="IPR050076">
    <property type="entry name" value="ArchSynthase1/Queuine_TRR"/>
</dbReference>
<dbReference type="InterPro" id="IPR004803">
    <property type="entry name" value="TGT"/>
</dbReference>
<dbReference type="InterPro" id="IPR036511">
    <property type="entry name" value="TGT-like_sf"/>
</dbReference>
<dbReference type="InterPro" id="IPR002616">
    <property type="entry name" value="tRNA_ribo_trans-like"/>
</dbReference>
<dbReference type="NCBIfam" id="TIGR00430">
    <property type="entry name" value="Q_tRNA_tgt"/>
    <property type="match status" value="1"/>
</dbReference>
<dbReference type="NCBIfam" id="TIGR00449">
    <property type="entry name" value="tgt_general"/>
    <property type="match status" value="1"/>
</dbReference>
<dbReference type="PANTHER" id="PTHR46499">
    <property type="entry name" value="QUEUINE TRNA-RIBOSYLTRANSFERASE"/>
    <property type="match status" value="1"/>
</dbReference>
<dbReference type="PANTHER" id="PTHR46499:SF1">
    <property type="entry name" value="QUEUINE TRNA-RIBOSYLTRANSFERASE"/>
    <property type="match status" value="1"/>
</dbReference>
<dbReference type="Pfam" id="PF01702">
    <property type="entry name" value="TGT"/>
    <property type="match status" value="1"/>
</dbReference>
<dbReference type="SUPFAM" id="SSF51713">
    <property type="entry name" value="tRNA-guanine transglycosylase"/>
    <property type="match status" value="1"/>
</dbReference>
<accession>B0V625</accession>
<reference key="1">
    <citation type="journal article" date="2008" name="PLoS ONE">
        <title>Comparative analysis of Acinetobacters: three genomes for three lifestyles.</title>
        <authorList>
            <person name="Vallenet D."/>
            <person name="Nordmann P."/>
            <person name="Barbe V."/>
            <person name="Poirel L."/>
            <person name="Mangenot S."/>
            <person name="Bataille E."/>
            <person name="Dossat C."/>
            <person name="Gas S."/>
            <person name="Kreimeyer A."/>
            <person name="Lenoble P."/>
            <person name="Oztas S."/>
            <person name="Poulain J."/>
            <person name="Segurens B."/>
            <person name="Robert C."/>
            <person name="Abergel C."/>
            <person name="Claverie J.-M."/>
            <person name="Raoult D."/>
            <person name="Medigue C."/>
            <person name="Weissenbach J."/>
            <person name="Cruveiller S."/>
        </authorList>
    </citation>
    <scope>NUCLEOTIDE SEQUENCE [LARGE SCALE GENOMIC DNA]</scope>
    <source>
        <strain>AYE</strain>
    </source>
</reference>
<gene>
    <name evidence="1" type="primary">tgt</name>
    <name type="ordered locus">ABAYE0528</name>
</gene>
<organism>
    <name type="scientific">Acinetobacter baumannii (strain AYE)</name>
    <dbReference type="NCBI Taxonomy" id="509173"/>
    <lineage>
        <taxon>Bacteria</taxon>
        <taxon>Pseudomonadati</taxon>
        <taxon>Pseudomonadota</taxon>
        <taxon>Gammaproteobacteria</taxon>
        <taxon>Moraxellales</taxon>
        <taxon>Moraxellaceae</taxon>
        <taxon>Acinetobacter</taxon>
        <taxon>Acinetobacter calcoaceticus/baumannii complex</taxon>
    </lineage>
</organism>
<feature type="chain" id="PRO_1000097525" description="Queuine tRNA-ribosyltransferase">
    <location>
        <begin position="1"/>
        <end position="377"/>
    </location>
</feature>
<feature type="region of interest" description="RNA binding" evidence="1">
    <location>
        <begin position="246"/>
        <end position="252"/>
    </location>
</feature>
<feature type="region of interest" description="RNA binding; important for wobble base 34 recognition" evidence="1">
    <location>
        <begin position="270"/>
        <end position="274"/>
    </location>
</feature>
<feature type="active site" description="Proton acceptor" evidence="1">
    <location>
        <position position="89"/>
    </location>
</feature>
<feature type="active site" description="Nucleophile" evidence="1">
    <location>
        <position position="265"/>
    </location>
</feature>
<feature type="binding site" evidence="1">
    <location>
        <begin position="89"/>
        <end position="93"/>
    </location>
    <ligand>
        <name>substrate</name>
    </ligand>
</feature>
<feature type="binding site" evidence="1">
    <location>
        <position position="143"/>
    </location>
    <ligand>
        <name>substrate</name>
    </ligand>
</feature>
<feature type="binding site" evidence="1">
    <location>
        <position position="188"/>
    </location>
    <ligand>
        <name>substrate</name>
    </ligand>
</feature>
<feature type="binding site" evidence="1">
    <location>
        <position position="215"/>
    </location>
    <ligand>
        <name>substrate</name>
    </ligand>
</feature>
<feature type="binding site" evidence="1">
    <location>
        <position position="303"/>
    </location>
    <ligand>
        <name>Zn(2+)</name>
        <dbReference type="ChEBI" id="CHEBI:29105"/>
    </ligand>
</feature>
<feature type="binding site" evidence="1">
    <location>
        <position position="305"/>
    </location>
    <ligand>
        <name>Zn(2+)</name>
        <dbReference type="ChEBI" id="CHEBI:29105"/>
    </ligand>
</feature>
<feature type="binding site" evidence="1">
    <location>
        <position position="308"/>
    </location>
    <ligand>
        <name>Zn(2+)</name>
        <dbReference type="ChEBI" id="CHEBI:29105"/>
    </ligand>
</feature>
<feature type="binding site" evidence="1">
    <location>
        <position position="334"/>
    </location>
    <ligand>
        <name>Zn(2+)</name>
        <dbReference type="ChEBI" id="CHEBI:29105"/>
    </ligand>
</feature>
<sequence>MKFEKLGQSGRARRGRLTLEHGVVETPVFMPVGTYGTVKGMLPRDIEDIQAQIILGNTFHLYLRPGLEVIKQHGGLHDFIKWNKPILTDSGGFQVFSLGAMRKIKEEGVTFRSPIDGSKVFLSPEISMEIQHVLNSDIVMIFDECTPYPATHEEAQKSLQLSLRWAKRCKAHHHDELKNKNALFGIIQGGMYEDLRDESLNGLLEIGFDGYAIGGLSVGEPKEEMIKVLDYLPNKMPHDKPRYLMGVGKPEDIVEAVRRGVDMFDCVMPTRNARNGHYFVTDGLVRIRNSKYRHDQGPLDPHCDCYTCKNFTRAYLFHLEKCGEMLASMLGTIHNLRYYQRLTEGMRDALDNGTFDEFVQDFYARRGLEVPPCPVDE</sequence>
<protein>
    <recommendedName>
        <fullName evidence="1">Queuine tRNA-ribosyltransferase</fullName>
        <ecNumber evidence="1">2.4.2.29</ecNumber>
    </recommendedName>
    <alternativeName>
        <fullName evidence="1">Guanine insertion enzyme</fullName>
    </alternativeName>
    <alternativeName>
        <fullName evidence="1">tRNA-guanine transglycosylase</fullName>
    </alternativeName>
</protein>
<proteinExistence type="inferred from homology"/>
<comment type="function">
    <text evidence="1">Catalyzes the base-exchange of a guanine (G) residue with the queuine precursor 7-aminomethyl-7-deazaguanine (PreQ1) at position 34 (anticodon wobble position) in tRNAs with GU(N) anticodons (tRNA-Asp, -Asn, -His and -Tyr). Catalysis occurs through a double-displacement mechanism. The nucleophile active site attacks the C1' of nucleotide 34 to detach the guanine base from the RNA, forming a covalent enzyme-RNA intermediate. The proton acceptor active site deprotonates the incoming PreQ1, allowing a nucleophilic attack on the C1' of the ribose to form the product. After dissociation, two additional enzymatic reactions on the tRNA convert PreQ1 to queuine (Q), resulting in the hypermodified nucleoside queuosine (7-(((4,5-cis-dihydroxy-2-cyclopenten-1-yl)amino)methyl)-7-deazaguanosine).</text>
</comment>
<comment type="catalytic activity">
    <reaction evidence="1">
        <text>7-aminomethyl-7-carbaguanine + guanosine(34) in tRNA = 7-aminomethyl-7-carbaguanosine(34) in tRNA + guanine</text>
        <dbReference type="Rhea" id="RHEA:24104"/>
        <dbReference type="Rhea" id="RHEA-COMP:10341"/>
        <dbReference type="Rhea" id="RHEA-COMP:10342"/>
        <dbReference type="ChEBI" id="CHEBI:16235"/>
        <dbReference type="ChEBI" id="CHEBI:58703"/>
        <dbReference type="ChEBI" id="CHEBI:74269"/>
        <dbReference type="ChEBI" id="CHEBI:82833"/>
        <dbReference type="EC" id="2.4.2.29"/>
    </reaction>
</comment>
<comment type="cofactor">
    <cofactor evidence="1">
        <name>Zn(2+)</name>
        <dbReference type="ChEBI" id="CHEBI:29105"/>
    </cofactor>
    <text evidence="1">Binds 1 zinc ion per subunit.</text>
</comment>
<comment type="pathway">
    <text evidence="1">tRNA modification; tRNA-queuosine biosynthesis.</text>
</comment>
<comment type="subunit">
    <text evidence="1">Homodimer. Within each dimer, one monomer is responsible for RNA recognition and catalysis, while the other monomer binds to the replacement base PreQ1.</text>
</comment>
<comment type="similarity">
    <text evidence="1">Belongs to the queuine tRNA-ribosyltransferase family.</text>
</comment>
<evidence type="ECO:0000255" key="1">
    <source>
        <dbReference type="HAMAP-Rule" id="MF_00168"/>
    </source>
</evidence>
<name>TGT_ACIBY</name>
<keyword id="KW-0328">Glycosyltransferase</keyword>
<keyword id="KW-0479">Metal-binding</keyword>
<keyword id="KW-0671">Queuosine biosynthesis</keyword>
<keyword id="KW-0808">Transferase</keyword>
<keyword id="KW-0819">tRNA processing</keyword>
<keyword id="KW-0862">Zinc</keyword>